<proteinExistence type="inferred from homology"/>
<feature type="chain" id="PRO_0000060859" description="Cytochrome b">
    <location>
        <begin position="1"/>
        <end position="379"/>
    </location>
</feature>
<feature type="transmembrane region" description="Helical" evidence="2">
    <location>
        <begin position="33"/>
        <end position="53"/>
    </location>
</feature>
<feature type="transmembrane region" description="Helical" evidence="2">
    <location>
        <begin position="77"/>
        <end position="98"/>
    </location>
</feature>
<feature type="transmembrane region" description="Helical" evidence="2">
    <location>
        <begin position="113"/>
        <end position="133"/>
    </location>
</feature>
<feature type="transmembrane region" description="Helical" evidence="2">
    <location>
        <begin position="178"/>
        <end position="198"/>
    </location>
</feature>
<feature type="transmembrane region" description="Helical" evidence="2">
    <location>
        <begin position="226"/>
        <end position="246"/>
    </location>
</feature>
<feature type="transmembrane region" description="Helical" evidence="2">
    <location>
        <begin position="288"/>
        <end position="308"/>
    </location>
</feature>
<feature type="transmembrane region" description="Helical" evidence="2">
    <location>
        <begin position="320"/>
        <end position="340"/>
    </location>
</feature>
<feature type="transmembrane region" description="Helical" evidence="2">
    <location>
        <begin position="347"/>
        <end position="367"/>
    </location>
</feature>
<feature type="binding site" description="axial binding residue" evidence="2">
    <location>
        <position position="83"/>
    </location>
    <ligand>
        <name>heme b</name>
        <dbReference type="ChEBI" id="CHEBI:60344"/>
        <label>b562</label>
    </ligand>
    <ligandPart>
        <name>Fe</name>
        <dbReference type="ChEBI" id="CHEBI:18248"/>
    </ligandPart>
</feature>
<feature type="binding site" description="axial binding residue" evidence="2">
    <location>
        <position position="97"/>
    </location>
    <ligand>
        <name>heme b</name>
        <dbReference type="ChEBI" id="CHEBI:60344"/>
        <label>b566</label>
    </ligand>
    <ligandPart>
        <name>Fe</name>
        <dbReference type="ChEBI" id="CHEBI:18248"/>
    </ligandPart>
</feature>
<feature type="binding site" description="axial binding residue" evidence="2">
    <location>
        <position position="182"/>
    </location>
    <ligand>
        <name>heme b</name>
        <dbReference type="ChEBI" id="CHEBI:60344"/>
        <label>b562</label>
    </ligand>
    <ligandPart>
        <name>Fe</name>
        <dbReference type="ChEBI" id="CHEBI:18248"/>
    </ligandPart>
</feature>
<feature type="binding site" description="axial binding residue" evidence="2">
    <location>
        <position position="196"/>
    </location>
    <ligand>
        <name>heme b</name>
        <dbReference type="ChEBI" id="CHEBI:60344"/>
        <label>b566</label>
    </ligand>
    <ligandPart>
        <name>Fe</name>
        <dbReference type="ChEBI" id="CHEBI:18248"/>
    </ligandPart>
</feature>
<feature type="binding site" evidence="2">
    <location>
        <position position="201"/>
    </location>
    <ligand>
        <name>a ubiquinone</name>
        <dbReference type="ChEBI" id="CHEBI:16389"/>
    </ligand>
</feature>
<comment type="function">
    <text evidence="2">Component of the ubiquinol-cytochrome c reductase complex (complex III or cytochrome b-c1 complex) that is part of the mitochondrial respiratory chain. The b-c1 complex mediates electron transfer from ubiquinol to cytochrome c. Contributes to the generation of a proton gradient across the mitochondrial membrane that is then used for ATP synthesis.</text>
</comment>
<comment type="cofactor">
    <cofactor evidence="2">
        <name>heme b</name>
        <dbReference type="ChEBI" id="CHEBI:60344"/>
    </cofactor>
    <text evidence="2">Binds 2 heme b groups non-covalently.</text>
</comment>
<comment type="subunit">
    <text evidence="2">The cytochrome bc1 complex contains 11 subunits: 3 respiratory subunits (MT-CYB, CYC1 and UQCRFS1), 2 core proteins (UQCRC1 and UQCRC2) and 6 low-molecular weight proteins (UQCRH/QCR6, UQCRB/QCR7, UQCRQ/QCR8, UQCR10/QCR9, UQCR11/QCR10 and a cleavage product of UQCRFS1). This cytochrome bc1 complex then forms a dimer.</text>
</comment>
<comment type="subcellular location">
    <subcellularLocation>
        <location evidence="2">Mitochondrion inner membrane</location>
        <topology evidence="2">Multi-pass membrane protein</topology>
    </subcellularLocation>
</comment>
<comment type="miscellaneous">
    <text evidence="1">Heme 1 (or BL or b562) is low-potential and absorbs at about 562 nm, and heme 2 (or BH or b566) is high-potential and absorbs at about 566 nm.</text>
</comment>
<comment type="similarity">
    <text evidence="3 4">Belongs to the cytochrome b family.</text>
</comment>
<comment type="caution">
    <text evidence="2">The full-length protein contains only eight transmembrane helices, not nine as predicted by bioinformatics tools.</text>
</comment>
<sequence>MTNIRKTHPLMKIVNNAFIDLPAPSNISSWWNFGSLLGICLILQILTGLFLAMHYTSDTMTAFSSVTHICRDVNYGWIIRYMHANGASMFFICLFLHVGRGLYYGSYTFLETWNIGVILLFATMATAFMGYVLPWGQMSFWGATVITNLLSAIPYIGTNLVEWIWGGFSVDKATLTRFFAFHFILPFIIAALAMVHLLFLHETGSNNPTGISSDADKIPFHPYYTIKDILGALLLILALMLLVLFAPDLLGDPDNYTPANPLNTPPHIKPEWYFLFAYAILRSIPNKLGGVLALVLSILILVLMPLLHTSKQRSMMFRPISQCVFWILVADLLTLTWIGGQPVEHPYIIIGQLASIMYFLLILVVMPTASTIENNLLKW</sequence>
<keyword id="KW-0249">Electron transport</keyword>
<keyword id="KW-0349">Heme</keyword>
<keyword id="KW-0408">Iron</keyword>
<keyword id="KW-0472">Membrane</keyword>
<keyword id="KW-0479">Metal-binding</keyword>
<keyword id="KW-0496">Mitochondrion</keyword>
<keyword id="KW-0999">Mitochondrion inner membrane</keyword>
<keyword id="KW-0679">Respiratory chain</keyword>
<keyword id="KW-0812">Transmembrane</keyword>
<keyword id="KW-1133">Transmembrane helix</keyword>
<keyword id="KW-0813">Transport</keyword>
<keyword id="KW-0830">Ubiquinone</keyword>
<gene>
    <name type="primary">MT-CYB</name>
    <name type="synonym">COB</name>
    <name type="synonym">CYTB</name>
    <name type="synonym">MTCYB</name>
</gene>
<accession>Q9T9A7</accession>
<geneLocation type="mitochondrion"/>
<protein>
    <recommendedName>
        <fullName>Cytochrome b</fullName>
    </recommendedName>
    <alternativeName>
        <fullName>Complex III subunit 3</fullName>
    </alternativeName>
    <alternativeName>
        <fullName>Complex III subunit III</fullName>
    </alternativeName>
    <alternativeName>
        <fullName>Cytochrome b-c1 complex subunit 3</fullName>
    </alternativeName>
    <alternativeName>
        <fullName>Ubiquinol-cytochrome-c reductase complex cytochrome b subunit</fullName>
    </alternativeName>
</protein>
<evidence type="ECO:0000250" key="1"/>
<evidence type="ECO:0000250" key="2">
    <source>
        <dbReference type="UniProtKB" id="P00157"/>
    </source>
</evidence>
<evidence type="ECO:0000255" key="3">
    <source>
        <dbReference type="PROSITE-ProRule" id="PRU00967"/>
    </source>
</evidence>
<evidence type="ECO:0000255" key="4">
    <source>
        <dbReference type="PROSITE-ProRule" id="PRU00968"/>
    </source>
</evidence>
<organism>
    <name type="scientific">Damaliscus pygargus</name>
    <name type="common">Bontebok</name>
    <dbReference type="NCBI Taxonomy" id="9931"/>
    <lineage>
        <taxon>Eukaryota</taxon>
        <taxon>Metazoa</taxon>
        <taxon>Chordata</taxon>
        <taxon>Craniata</taxon>
        <taxon>Vertebrata</taxon>
        <taxon>Euteleostomi</taxon>
        <taxon>Mammalia</taxon>
        <taxon>Eutheria</taxon>
        <taxon>Laurasiatheria</taxon>
        <taxon>Artiodactyla</taxon>
        <taxon>Ruminantia</taxon>
        <taxon>Pecora</taxon>
        <taxon>Bovidae</taxon>
        <taxon>Alcelaphinae</taxon>
        <taxon>Damaliscus</taxon>
    </lineage>
</organism>
<dbReference type="EMBL" id="AF036287">
    <property type="protein sequence ID" value="AAD51438.1"/>
    <property type="molecule type" value="Genomic_DNA"/>
</dbReference>
<dbReference type="RefSeq" id="YP_007625119.1">
    <property type="nucleotide sequence ID" value="NC_020627.1"/>
</dbReference>
<dbReference type="SMR" id="Q9T9A7"/>
<dbReference type="GeneID" id="14841669"/>
<dbReference type="CTD" id="4519"/>
<dbReference type="GO" id="GO:0005743">
    <property type="term" value="C:mitochondrial inner membrane"/>
    <property type="evidence" value="ECO:0007669"/>
    <property type="project" value="UniProtKB-SubCell"/>
</dbReference>
<dbReference type="GO" id="GO:0045275">
    <property type="term" value="C:respiratory chain complex III"/>
    <property type="evidence" value="ECO:0007669"/>
    <property type="project" value="InterPro"/>
</dbReference>
<dbReference type="GO" id="GO:0046872">
    <property type="term" value="F:metal ion binding"/>
    <property type="evidence" value="ECO:0007669"/>
    <property type="project" value="UniProtKB-KW"/>
</dbReference>
<dbReference type="GO" id="GO:0008121">
    <property type="term" value="F:ubiquinol-cytochrome-c reductase activity"/>
    <property type="evidence" value="ECO:0007669"/>
    <property type="project" value="InterPro"/>
</dbReference>
<dbReference type="GO" id="GO:0006122">
    <property type="term" value="P:mitochondrial electron transport, ubiquinol to cytochrome c"/>
    <property type="evidence" value="ECO:0007669"/>
    <property type="project" value="TreeGrafter"/>
</dbReference>
<dbReference type="CDD" id="cd00290">
    <property type="entry name" value="cytochrome_b_C"/>
    <property type="match status" value="1"/>
</dbReference>
<dbReference type="CDD" id="cd00284">
    <property type="entry name" value="Cytochrome_b_N"/>
    <property type="match status" value="1"/>
</dbReference>
<dbReference type="FunFam" id="1.20.810.10:FF:000002">
    <property type="entry name" value="Cytochrome b"/>
    <property type="match status" value="1"/>
</dbReference>
<dbReference type="Gene3D" id="1.20.810.10">
    <property type="entry name" value="Cytochrome Bc1 Complex, Chain C"/>
    <property type="match status" value="1"/>
</dbReference>
<dbReference type="InterPro" id="IPR005798">
    <property type="entry name" value="Cyt_b/b6_C"/>
</dbReference>
<dbReference type="InterPro" id="IPR036150">
    <property type="entry name" value="Cyt_b/b6_C_sf"/>
</dbReference>
<dbReference type="InterPro" id="IPR005797">
    <property type="entry name" value="Cyt_b/b6_N"/>
</dbReference>
<dbReference type="InterPro" id="IPR027387">
    <property type="entry name" value="Cytb/b6-like_sf"/>
</dbReference>
<dbReference type="InterPro" id="IPR030689">
    <property type="entry name" value="Cytochrome_b"/>
</dbReference>
<dbReference type="InterPro" id="IPR048260">
    <property type="entry name" value="Cytochrome_b_C_euk/bac"/>
</dbReference>
<dbReference type="InterPro" id="IPR048259">
    <property type="entry name" value="Cytochrome_b_N_euk/bac"/>
</dbReference>
<dbReference type="InterPro" id="IPR016174">
    <property type="entry name" value="Di-haem_cyt_TM"/>
</dbReference>
<dbReference type="PANTHER" id="PTHR19271">
    <property type="entry name" value="CYTOCHROME B"/>
    <property type="match status" value="1"/>
</dbReference>
<dbReference type="PANTHER" id="PTHR19271:SF16">
    <property type="entry name" value="CYTOCHROME B"/>
    <property type="match status" value="1"/>
</dbReference>
<dbReference type="Pfam" id="PF00032">
    <property type="entry name" value="Cytochrom_B_C"/>
    <property type="match status" value="1"/>
</dbReference>
<dbReference type="Pfam" id="PF00033">
    <property type="entry name" value="Cytochrome_B"/>
    <property type="match status" value="1"/>
</dbReference>
<dbReference type="PIRSF" id="PIRSF038885">
    <property type="entry name" value="COB"/>
    <property type="match status" value="1"/>
</dbReference>
<dbReference type="SUPFAM" id="SSF81648">
    <property type="entry name" value="a domain/subunit of cytochrome bc1 complex (Ubiquinol-cytochrome c reductase)"/>
    <property type="match status" value="1"/>
</dbReference>
<dbReference type="SUPFAM" id="SSF81342">
    <property type="entry name" value="Transmembrane di-heme cytochromes"/>
    <property type="match status" value="1"/>
</dbReference>
<dbReference type="PROSITE" id="PS51003">
    <property type="entry name" value="CYTB_CTER"/>
    <property type="match status" value="1"/>
</dbReference>
<dbReference type="PROSITE" id="PS51002">
    <property type="entry name" value="CYTB_NTER"/>
    <property type="match status" value="1"/>
</dbReference>
<reference key="1">
    <citation type="journal article" date="1999" name="Mol. Phylogenet. Evol.">
        <title>The tribal radiation of the family Bovidae (Artiodactyla) and the evolution of the mitochondrial cytochrome b gene.</title>
        <authorList>
            <person name="Hassanin A."/>
            <person name="Douzery E.J.P."/>
        </authorList>
    </citation>
    <scope>NUCLEOTIDE SEQUENCE [GENOMIC DNA]</scope>
</reference>
<name>CYB_DAMPY</name>